<keyword id="KW-0131">Cell cycle</keyword>
<keyword id="KW-0132">Cell division</keyword>
<keyword id="KW-0961">Cell wall biogenesis/degradation</keyword>
<keyword id="KW-1185">Reference proteome</keyword>
<keyword id="KW-0677">Repeat</keyword>
<keyword id="KW-0853">WD repeat</keyword>
<comment type="function">
    <text evidence="1">Involved in cell wall metabolism and required for the separation of the mother and daughter cells.</text>
</comment>
<comment type="similarity">
    <text evidence="3">Belongs to the WD repeat DSE1 family.</text>
</comment>
<sequence>MDALVNSFEDLNTSHTTSRYRAKRHHARTKSSPGSIKRNQSIRRHSRTLSTHYDSSNPYQDASTSYAQLSMGRRTEGSSTKPRPKSYVEPSHTQTQAHYATDSHHPSHSRSHSQTGHGPRATFRHHHHRSKSHTNPRSRFELRPQSHHETYTYLPDDPSPQFDEPNFSWMEEAENQLSELQSKYKPEPMAASTSLSWQIPDESHHLTSVAVHESSPLIAVGSGGKENNLFVYETTQDKGLIHHQTISLPAIHGLKWLSPSQQVADLGNILATSHSNGLAHLVLLPDCYSSDPAEILKRFNHKHHVSIKDTLSTRIKHLELTTPAWRSSVSSSLATLYSQHLFLWDPSRGDTPVLTRKVKRAEAFSLSPFQDGQVAAACGKYTSLLDLRAKSGSVNLLAGNTNLCAYSPMNSNLLATAHSDVSGLQENCVRIWDSRHTAGPLHKLEGHTDQIRSLEWSKFNPCELHTSSNDGSLRLWNIGRQQETKARPSLEVYSGDLAAQWDEQKASAQWLPRSARQMQQRGLAFNVAPLNIQKKEKKEKKPALYSSSVIAKTPHAAVASASFMPTGSMHPSVVTVDSYGSLGIHSMPSATPYNTEPETPRTLTARMSVQSFASTDMSSDFTEADMSSASDTSPMTSPSMASAATFQSSYDSPVKACIPEARPATYETSVSSSFIPPLQIKKRVPSGPRPEGSHVRRPSRESRNMLPELDLDFDFGLTA</sequence>
<proteinExistence type="inferred from homology"/>
<feature type="chain" id="PRO_0000285350" description="Protein DSE1">
    <location>
        <begin position="1"/>
        <end position="719"/>
    </location>
</feature>
<feature type="repeat" description="WD 1">
    <location>
        <begin position="201"/>
        <end position="242"/>
    </location>
</feature>
<feature type="repeat" description="WD 2">
    <location>
        <begin position="246"/>
        <end position="294"/>
    </location>
</feature>
<feature type="repeat" description="WD 3">
    <location>
        <begin position="310"/>
        <end position="354"/>
    </location>
</feature>
<feature type="repeat" description="WD 4">
    <location>
        <begin position="396"/>
        <end position="442"/>
    </location>
</feature>
<feature type="repeat" description="WD 5">
    <location>
        <begin position="446"/>
        <end position="486"/>
    </location>
</feature>
<feature type="region of interest" description="Disordered" evidence="2">
    <location>
        <begin position="1"/>
        <end position="144"/>
    </location>
</feature>
<feature type="region of interest" description="Disordered" evidence="2">
    <location>
        <begin position="677"/>
        <end position="707"/>
    </location>
</feature>
<feature type="compositionally biased region" description="Basic residues" evidence="2">
    <location>
        <begin position="18"/>
        <end position="29"/>
    </location>
</feature>
<feature type="compositionally biased region" description="Polar residues" evidence="2">
    <location>
        <begin position="30"/>
        <end position="39"/>
    </location>
</feature>
<feature type="compositionally biased region" description="Polar residues" evidence="2">
    <location>
        <begin position="48"/>
        <end position="68"/>
    </location>
</feature>
<feature type="compositionally biased region" description="Basic residues" evidence="2">
    <location>
        <begin position="122"/>
        <end position="136"/>
    </location>
</feature>
<feature type="compositionally biased region" description="Basic and acidic residues" evidence="2">
    <location>
        <begin position="691"/>
        <end position="703"/>
    </location>
</feature>
<name>DSE1_YARLI</name>
<evidence type="ECO:0000250" key="1"/>
<evidence type="ECO:0000256" key="2">
    <source>
        <dbReference type="SAM" id="MobiDB-lite"/>
    </source>
</evidence>
<evidence type="ECO:0000305" key="3"/>
<accession>Q6C9N0</accession>
<organism>
    <name type="scientific">Yarrowia lipolytica (strain CLIB 122 / E 150)</name>
    <name type="common">Yeast</name>
    <name type="synonym">Candida lipolytica</name>
    <dbReference type="NCBI Taxonomy" id="284591"/>
    <lineage>
        <taxon>Eukaryota</taxon>
        <taxon>Fungi</taxon>
        <taxon>Dikarya</taxon>
        <taxon>Ascomycota</taxon>
        <taxon>Saccharomycotina</taxon>
        <taxon>Dipodascomycetes</taxon>
        <taxon>Dipodascales</taxon>
        <taxon>Dipodascales incertae sedis</taxon>
        <taxon>Yarrowia</taxon>
    </lineage>
</organism>
<gene>
    <name type="primary">DSE1</name>
    <name type="ordered locus">YALI0D09823g</name>
</gene>
<reference key="1">
    <citation type="journal article" date="2004" name="Nature">
        <title>Genome evolution in yeasts.</title>
        <authorList>
            <person name="Dujon B."/>
            <person name="Sherman D."/>
            <person name="Fischer G."/>
            <person name="Durrens P."/>
            <person name="Casaregola S."/>
            <person name="Lafontaine I."/>
            <person name="de Montigny J."/>
            <person name="Marck C."/>
            <person name="Neuveglise C."/>
            <person name="Talla E."/>
            <person name="Goffard N."/>
            <person name="Frangeul L."/>
            <person name="Aigle M."/>
            <person name="Anthouard V."/>
            <person name="Babour A."/>
            <person name="Barbe V."/>
            <person name="Barnay S."/>
            <person name="Blanchin S."/>
            <person name="Beckerich J.-M."/>
            <person name="Beyne E."/>
            <person name="Bleykasten C."/>
            <person name="Boisrame A."/>
            <person name="Boyer J."/>
            <person name="Cattolico L."/>
            <person name="Confanioleri F."/>
            <person name="de Daruvar A."/>
            <person name="Despons L."/>
            <person name="Fabre E."/>
            <person name="Fairhead C."/>
            <person name="Ferry-Dumazet H."/>
            <person name="Groppi A."/>
            <person name="Hantraye F."/>
            <person name="Hennequin C."/>
            <person name="Jauniaux N."/>
            <person name="Joyet P."/>
            <person name="Kachouri R."/>
            <person name="Kerrest A."/>
            <person name="Koszul R."/>
            <person name="Lemaire M."/>
            <person name="Lesur I."/>
            <person name="Ma L."/>
            <person name="Muller H."/>
            <person name="Nicaud J.-M."/>
            <person name="Nikolski M."/>
            <person name="Oztas S."/>
            <person name="Ozier-Kalogeropoulos O."/>
            <person name="Pellenz S."/>
            <person name="Potier S."/>
            <person name="Richard G.-F."/>
            <person name="Straub M.-L."/>
            <person name="Suleau A."/>
            <person name="Swennen D."/>
            <person name="Tekaia F."/>
            <person name="Wesolowski-Louvel M."/>
            <person name="Westhof E."/>
            <person name="Wirth B."/>
            <person name="Zeniou-Meyer M."/>
            <person name="Zivanovic Y."/>
            <person name="Bolotin-Fukuhara M."/>
            <person name="Thierry A."/>
            <person name="Bouchier C."/>
            <person name="Caudron B."/>
            <person name="Scarpelli C."/>
            <person name="Gaillardin C."/>
            <person name="Weissenbach J."/>
            <person name="Wincker P."/>
            <person name="Souciet J.-L."/>
        </authorList>
    </citation>
    <scope>NUCLEOTIDE SEQUENCE [LARGE SCALE GENOMIC DNA]</scope>
    <source>
        <strain>CLIB 122 / E 150</strain>
    </source>
</reference>
<protein>
    <recommendedName>
        <fullName>Protein DSE1</fullName>
    </recommendedName>
    <alternativeName>
        <fullName>Daughter-specific expression protein 1</fullName>
    </alternativeName>
</protein>
<dbReference type="EMBL" id="CR382130">
    <property type="protein sequence ID" value="CAG80820.1"/>
    <property type="molecule type" value="Genomic_DNA"/>
</dbReference>
<dbReference type="RefSeq" id="XP_502632.1">
    <property type="nucleotide sequence ID" value="XM_502632.1"/>
</dbReference>
<dbReference type="SMR" id="Q6C9N0"/>
<dbReference type="FunCoup" id="Q6C9N0">
    <property type="interactions" value="20"/>
</dbReference>
<dbReference type="STRING" id="284591.Q6C9N0"/>
<dbReference type="EnsemblFungi" id="CAG80820">
    <property type="protein sequence ID" value="CAG80820"/>
    <property type="gene ID" value="YALI0_D09823g"/>
</dbReference>
<dbReference type="KEGG" id="yli:2910923"/>
<dbReference type="VEuPathDB" id="FungiDB:YALI0_D09823g"/>
<dbReference type="HOGENOM" id="CLU_384599_0_0_1"/>
<dbReference type="InParanoid" id="Q6C9N0"/>
<dbReference type="OMA" id="ACIPEAR"/>
<dbReference type="OrthoDB" id="97180at4891"/>
<dbReference type="Proteomes" id="UP000001300">
    <property type="component" value="Chromosome D"/>
</dbReference>
<dbReference type="GO" id="GO:0005737">
    <property type="term" value="C:cytoplasm"/>
    <property type="evidence" value="ECO:0000318"/>
    <property type="project" value="GO_Central"/>
</dbReference>
<dbReference type="GO" id="GO:0005634">
    <property type="term" value="C:nucleus"/>
    <property type="evidence" value="ECO:0000318"/>
    <property type="project" value="GO_Central"/>
</dbReference>
<dbReference type="GO" id="GO:0033698">
    <property type="term" value="C:Rpd3L complex"/>
    <property type="evidence" value="ECO:0000318"/>
    <property type="project" value="GO_Central"/>
</dbReference>
<dbReference type="GO" id="GO:0070210">
    <property type="term" value="C:Rpd3L-Expanded complex"/>
    <property type="evidence" value="ECO:0000318"/>
    <property type="project" value="GO_Central"/>
</dbReference>
<dbReference type="GO" id="GO:0042393">
    <property type="term" value="F:histone binding"/>
    <property type="evidence" value="ECO:0000318"/>
    <property type="project" value="GO_Central"/>
</dbReference>
<dbReference type="GO" id="GO:0051301">
    <property type="term" value="P:cell division"/>
    <property type="evidence" value="ECO:0007669"/>
    <property type="project" value="UniProtKB-KW"/>
</dbReference>
<dbReference type="GO" id="GO:0071555">
    <property type="term" value="P:cell wall organization"/>
    <property type="evidence" value="ECO:0007669"/>
    <property type="project" value="UniProtKB-KW"/>
</dbReference>
<dbReference type="GO" id="GO:0006338">
    <property type="term" value="P:chromatin remodeling"/>
    <property type="evidence" value="ECO:0000318"/>
    <property type="project" value="GO_Central"/>
</dbReference>
<dbReference type="GO" id="GO:0006355">
    <property type="term" value="P:regulation of DNA-templated transcription"/>
    <property type="evidence" value="ECO:0000318"/>
    <property type="project" value="GO_Central"/>
</dbReference>
<dbReference type="Gene3D" id="2.130.10.10">
    <property type="entry name" value="YVTN repeat-like/Quinoprotein amine dehydrogenase"/>
    <property type="match status" value="1"/>
</dbReference>
<dbReference type="InterPro" id="IPR015943">
    <property type="entry name" value="WD40/YVTN_repeat-like_dom_sf"/>
</dbReference>
<dbReference type="InterPro" id="IPR036322">
    <property type="entry name" value="WD40_repeat_dom_sf"/>
</dbReference>
<dbReference type="InterPro" id="IPR001680">
    <property type="entry name" value="WD40_rpt"/>
</dbReference>
<dbReference type="InterPro" id="IPR050459">
    <property type="entry name" value="WD_repeat_RBAP46/RBAP48/MSI1"/>
</dbReference>
<dbReference type="PANTHER" id="PTHR22850">
    <property type="entry name" value="WD40 REPEAT FAMILY"/>
    <property type="match status" value="1"/>
</dbReference>
<dbReference type="Pfam" id="PF00400">
    <property type="entry name" value="WD40"/>
    <property type="match status" value="1"/>
</dbReference>
<dbReference type="SMART" id="SM00320">
    <property type="entry name" value="WD40"/>
    <property type="match status" value="3"/>
</dbReference>
<dbReference type="SUPFAM" id="SSF50978">
    <property type="entry name" value="WD40 repeat-like"/>
    <property type="match status" value="1"/>
</dbReference>
<dbReference type="PROSITE" id="PS50082">
    <property type="entry name" value="WD_REPEATS_2"/>
    <property type="match status" value="1"/>
</dbReference>
<dbReference type="PROSITE" id="PS50294">
    <property type="entry name" value="WD_REPEATS_REGION"/>
    <property type="match status" value="1"/>
</dbReference>